<accession>Q7TTZ0</accession>
<comment type="function">
    <text evidence="1">Together with the chaperonin GroEL, plays an essential role in assisting protein folding. The GroEL-GroES system forms a nano-cage that allows encapsulation of the non-native substrate proteins and provides a physical environment optimized to promote and accelerate protein folding. GroES binds to the apical surface of the GroEL ring, thereby capping the opening of the GroEL channel.</text>
</comment>
<comment type="subunit">
    <text evidence="1">Heptamer of 7 subunits arranged in a ring. Interacts with the chaperonin GroEL.</text>
</comment>
<comment type="subcellular location">
    <subcellularLocation>
        <location evidence="1">Cytoplasm</location>
    </subcellularLocation>
</comment>
<comment type="similarity">
    <text evidence="1">Belongs to the GroES chaperonin family.</text>
</comment>
<proteinExistence type="inferred from homology"/>
<evidence type="ECO:0000255" key="1">
    <source>
        <dbReference type="HAMAP-Rule" id="MF_00580"/>
    </source>
</evidence>
<evidence type="ECO:0000256" key="2">
    <source>
        <dbReference type="SAM" id="MobiDB-lite"/>
    </source>
</evidence>
<organism>
    <name type="scientific">Rhodopirellula baltica (strain DSM 10527 / NCIMB 13988 / SH1)</name>
    <dbReference type="NCBI Taxonomy" id="243090"/>
    <lineage>
        <taxon>Bacteria</taxon>
        <taxon>Pseudomonadati</taxon>
        <taxon>Planctomycetota</taxon>
        <taxon>Planctomycetia</taxon>
        <taxon>Pirellulales</taxon>
        <taxon>Pirellulaceae</taxon>
        <taxon>Rhodopirellula</taxon>
    </lineage>
</organism>
<protein>
    <recommendedName>
        <fullName evidence="1">Co-chaperonin GroES 2</fullName>
    </recommendedName>
    <alternativeName>
        <fullName evidence="1">10 kDa chaperonin 2</fullName>
    </alternativeName>
    <alternativeName>
        <fullName evidence="1">Chaperonin-10 2</fullName>
        <shortName evidence="1">Cpn10 2</shortName>
    </alternativeName>
</protein>
<dbReference type="EMBL" id="BX294152">
    <property type="protein sequence ID" value="CAD76884.1"/>
    <property type="molecule type" value="Genomic_DNA"/>
</dbReference>
<dbReference type="RefSeq" id="NP_869523.1">
    <property type="nucleotide sequence ID" value="NC_005027.1"/>
</dbReference>
<dbReference type="SMR" id="Q7TTZ0"/>
<dbReference type="FunCoup" id="Q7TTZ0">
    <property type="interactions" value="497"/>
</dbReference>
<dbReference type="STRING" id="243090.RB10627"/>
<dbReference type="EnsemblBacteria" id="CAD76884">
    <property type="protein sequence ID" value="CAD76884"/>
    <property type="gene ID" value="RB10627"/>
</dbReference>
<dbReference type="KEGG" id="rba:RB10627"/>
<dbReference type="PATRIC" id="fig|243090.15.peg.5134"/>
<dbReference type="eggNOG" id="COG0234">
    <property type="taxonomic scope" value="Bacteria"/>
</dbReference>
<dbReference type="HOGENOM" id="CLU_132825_2_0_0"/>
<dbReference type="InParanoid" id="Q7TTZ0"/>
<dbReference type="OrthoDB" id="9806791at2"/>
<dbReference type="Proteomes" id="UP000001025">
    <property type="component" value="Chromosome"/>
</dbReference>
<dbReference type="GO" id="GO:0005737">
    <property type="term" value="C:cytoplasm"/>
    <property type="evidence" value="ECO:0007669"/>
    <property type="project" value="UniProtKB-SubCell"/>
</dbReference>
<dbReference type="GO" id="GO:0005524">
    <property type="term" value="F:ATP binding"/>
    <property type="evidence" value="ECO:0007669"/>
    <property type="project" value="InterPro"/>
</dbReference>
<dbReference type="GO" id="GO:0046872">
    <property type="term" value="F:metal ion binding"/>
    <property type="evidence" value="ECO:0000318"/>
    <property type="project" value="GO_Central"/>
</dbReference>
<dbReference type="GO" id="GO:0044183">
    <property type="term" value="F:protein folding chaperone"/>
    <property type="evidence" value="ECO:0007669"/>
    <property type="project" value="InterPro"/>
</dbReference>
<dbReference type="GO" id="GO:0051087">
    <property type="term" value="F:protein-folding chaperone binding"/>
    <property type="evidence" value="ECO:0000318"/>
    <property type="project" value="GO_Central"/>
</dbReference>
<dbReference type="GO" id="GO:0051082">
    <property type="term" value="F:unfolded protein binding"/>
    <property type="evidence" value="ECO:0000318"/>
    <property type="project" value="GO_Central"/>
</dbReference>
<dbReference type="GO" id="GO:0051085">
    <property type="term" value="P:chaperone cofactor-dependent protein refolding"/>
    <property type="evidence" value="ECO:0000318"/>
    <property type="project" value="GO_Central"/>
</dbReference>
<dbReference type="CDD" id="cd00320">
    <property type="entry name" value="cpn10"/>
    <property type="match status" value="1"/>
</dbReference>
<dbReference type="FunFam" id="2.30.33.40:FF:000001">
    <property type="entry name" value="10 kDa chaperonin"/>
    <property type="match status" value="1"/>
</dbReference>
<dbReference type="Gene3D" id="2.30.33.40">
    <property type="entry name" value="GroES chaperonin"/>
    <property type="match status" value="1"/>
</dbReference>
<dbReference type="HAMAP" id="MF_00580">
    <property type="entry name" value="CH10"/>
    <property type="match status" value="1"/>
</dbReference>
<dbReference type="InterPro" id="IPR020818">
    <property type="entry name" value="Chaperonin_GroES"/>
</dbReference>
<dbReference type="InterPro" id="IPR037124">
    <property type="entry name" value="Chaperonin_GroES_sf"/>
</dbReference>
<dbReference type="InterPro" id="IPR018369">
    <property type="entry name" value="Chaprnonin_Cpn10_CS"/>
</dbReference>
<dbReference type="InterPro" id="IPR011032">
    <property type="entry name" value="GroES-like_sf"/>
</dbReference>
<dbReference type="NCBIfam" id="NF001527">
    <property type="entry name" value="PRK00364.1-2"/>
    <property type="match status" value="1"/>
</dbReference>
<dbReference type="NCBIfam" id="NF001531">
    <property type="entry name" value="PRK00364.2-2"/>
    <property type="match status" value="1"/>
</dbReference>
<dbReference type="NCBIfam" id="NF001533">
    <property type="entry name" value="PRK00364.2-4"/>
    <property type="match status" value="1"/>
</dbReference>
<dbReference type="PANTHER" id="PTHR10772">
    <property type="entry name" value="10 KDA HEAT SHOCK PROTEIN"/>
    <property type="match status" value="1"/>
</dbReference>
<dbReference type="PANTHER" id="PTHR10772:SF58">
    <property type="entry name" value="CO-CHAPERONIN GROES"/>
    <property type="match status" value="1"/>
</dbReference>
<dbReference type="Pfam" id="PF00166">
    <property type="entry name" value="Cpn10"/>
    <property type="match status" value="1"/>
</dbReference>
<dbReference type="PRINTS" id="PR00297">
    <property type="entry name" value="CHAPERONIN10"/>
</dbReference>
<dbReference type="SMART" id="SM00883">
    <property type="entry name" value="Cpn10"/>
    <property type="match status" value="1"/>
</dbReference>
<dbReference type="SUPFAM" id="SSF50129">
    <property type="entry name" value="GroES-like"/>
    <property type="match status" value="1"/>
</dbReference>
<dbReference type="PROSITE" id="PS00681">
    <property type="entry name" value="CHAPERONINS_CPN10"/>
    <property type="match status" value="1"/>
</dbReference>
<feature type="chain" id="PRO_0000174822" description="Co-chaperonin GroES 2">
    <location>
        <begin position="1"/>
        <end position="93"/>
    </location>
</feature>
<feature type="region of interest" description="Disordered" evidence="2">
    <location>
        <begin position="1"/>
        <end position="20"/>
    </location>
</feature>
<keyword id="KW-0143">Chaperone</keyword>
<keyword id="KW-0963">Cytoplasm</keyword>
<keyword id="KW-1185">Reference proteome</keyword>
<gene>
    <name evidence="1" type="primary">groES2</name>
    <name evidence="1" type="synonym">groS2</name>
    <name type="ordered locus">RB10627</name>
</gene>
<sequence>MQPLGERIVVQREESETTTAGGIVLPDSAKEKPARGTVVALGTGKLLDDGSRADFQLAAGDRVLFSSYAGETVEVDDTEYLLMREDDVLAVIE</sequence>
<reference key="1">
    <citation type="journal article" date="2003" name="Proc. Natl. Acad. Sci. U.S.A.">
        <title>Complete genome sequence of the marine planctomycete Pirellula sp. strain 1.</title>
        <authorList>
            <person name="Gloeckner F.O."/>
            <person name="Kube M."/>
            <person name="Bauer M."/>
            <person name="Teeling H."/>
            <person name="Lombardot T."/>
            <person name="Ludwig W."/>
            <person name="Gade D."/>
            <person name="Beck A."/>
            <person name="Borzym K."/>
            <person name="Heitmann K."/>
            <person name="Rabus R."/>
            <person name="Schlesner H."/>
            <person name="Amann R."/>
            <person name="Reinhardt R."/>
        </authorList>
    </citation>
    <scope>NUCLEOTIDE SEQUENCE [LARGE SCALE GENOMIC DNA]</scope>
    <source>
        <strain>DSM 10527 / NCIMB 13988 / SH1</strain>
    </source>
</reference>
<name>CH102_RHOBA</name>